<dbReference type="EC" id="3.1.1.89"/>
<dbReference type="EMBL" id="AAHF01000007">
    <property type="protein sequence ID" value="EAL88020.1"/>
    <property type="molecule type" value="Genomic_DNA"/>
</dbReference>
<dbReference type="RefSeq" id="XP_750058.1">
    <property type="nucleotide sequence ID" value="XM_744965.1"/>
</dbReference>
<dbReference type="SMR" id="Q4WKB2"/>
<dbReference type="FunCoup" id="Q4WKB2">
    <property type="interactions" value="840"/>
</dbReference>
<dbReference type="STRING" id="330879.Q4WKB2"/>
<dbReference type="ESTHER" id="aspfu-ppme1">
    <property type="family name" value="PPase_methylesterase_euk"/>
</dbReference>
<dbReference type="EnsemblFungi" id="EAL88020">
    <property type="protein sequence ID" value="EAL88020"/>
    <property type="gene ID" value="AFUA_1G03080"/>
</dbReference>
<dbReference type="GeneID" id="3507863"/>
<dbReference type="KEGG" id="afm:AFUA_1G03080"/>
<dbReference type="VEuPathDB" id="FungiDB:Afu1g03080"/>
<dbReference type="eggNOG" id="KOG2564">
    <property type="taxonomic scope" value="Eukaryota"/>
</dbReference>
<dbReference type="HOGENOM" id="CLU_024818_3_0_1"/>
<dbReference type="InParanoid" id="Q4WKB2"/>
<dbReference type="OMA" id="VMVCHHG"/>
<dbReference type="OrthoDB" id="194865at2759"/>
<dbReference type="Proteomes" id="UP000002530">
    <property type="component" value="Chromosome 1"/>
</dbReference>
<dbReference type="GO" id="GO:0051722">
    <property type="term" value="F:protein C-terminal methylesterase activity"/>
    <property type="evidence" value="ECO:0000318"/>
    <property type="project" value="GO_Central"/>
</dbReference>
<dbReference type="FunFam" id="3.40.50.1820:FF:000186">
    <property type="entry name" value="Protein phosphatase methylesterase 1"/>
    <property type="match status" value="1"/>
</dbReference>
<dbReference type="Gene3D" id="3.40.50.1820">
    <property type="entry name" value="alpha/beta hydrolase"/>
    <property type="match status" value="1"/>
</dbReference>
<dbReference type="InterPro" id="IPR000073">
    <property type="entry name" value="AB_hydrolase_1"/>
</dbReference>
<dbReference type="InterPro" id="IPR029058">
    <property type="entry name" value="AB_hydrolase_fold"/>
</dbReference>
<dbReference type="InterPro" id="IPR016812">
    <property type="entry name" value="PPase_methylesterase_euk"/>
</dbReference>
<dbReference type="PANTHER" id="PTHR14189:SF0">
    <property type="entry name" value="PROTEIN PHOSPHATASE METHYLESTERASE 1"/>
    <property type="match status" value="1"/>
</dbReference>
<dbReference type="PANTHER" id="PTHR14189">
    <property type="entry name" value="PROTEIN PHOSPHATASE METHYLESTERASE-1 RELATED"/>
    <property type="match status" value="1"/>
</dbReference>
<dbReference type="Pfam" id="PF12697">
    <property type="entry name" value="Abhydrolase_6"/>
    <property type="match status" value="1"/>
</dbReference>
<dbReference type="PIRSF" id="PIRSF022950">
    <property type="entry name" value="PPase_methylesterase_euk"/>
    <property type="match status" value="1"/>
</dbReference>
<dbReference type="SUPFAM" id="SSF53474">
    <property type="entry name" value="alpha/beta-Hydrolases"/>
    <property type="match status" value="1"/>
</dbReference>
<feature type="chain" id="PRO_0000223659" description="Protein phosphatase methylesterase 1">
    <location>
        <begin position="1"/>
        <end position="420"/>
    </location>
</feature>
<feature type="region of interest" description="Disordered" evidence="2">
    <location>
        <begin position="18"/>
        <end position="51"/>
    </location>
</feature>
<feature type="compositionally biased region" description="Low complexity" evidence="2">
    <location>
        <begin position="18"/>
        <end position="28"/>
    </location>
</feature>
<feature type="compositionally biased region" description="Low complexity" evidence="2">
    <location>
        <begin position="42"/>
        <end position="51"/>
    </location>
</feature>
<feature type="active site" evidence="1">
    <location>
        <position position="197"/>
    </location>
</feature>
<feature type="active site" evidence="1">
    <location>
        <position position="223"/>
    </location>
</feature>
<feature type="active site" evidence="1">
    <location>
        <position position="354"/>
    </location>
</feature>
<reference key="1">
    <citation type="journal article" date="2005" name="Nature">
        <title>Genomic sequence of the pathogenic and allergenic filamentous fungus Aspergillus fumigatus.</title>
        <authorList>
            <person name="Nierman W.C."/>
            <person name="Pain A."/>
            <person name="Anderson M.J."/>
            <person name="Wortman J.R."/>
            <person name="Kim H.S."/>
            <person name="Arroyo J."/>
            <person name="Berriman M."/>
            <person name="Abe K."/>
            <person name="Archer D.B."/>
            <person name="Bermejo C."/>
            <person name="Bennett J.W."/>
            <person name="Bowyer P."/>
            <person name="Chen D."/>
            <person name="Collins M."/>
            <person name="Coulsen R."/>
            <person name="Davies R."/>
            <person name="Dyer P.S."/>
            <person name="Farman M.L."/>
            <person name="Fedorova N."/>
            <person name="Fedorova N.D."/>
            <person name="Feldblyum T.V."/>
            <person name="Fischer R."/>
            <person name="Fosker N."/>
            <person name="Fraser A."/>
            <person name="Garcia J.L."/>
            <person name="Garcia M.J."/>
            <person name="Goble A."/>
            <person name="Goldman G.H."/>
            <person name="Gomi K."/>
            <person name="Griffith-Jones S."/>
            <person name="Gwilliam R."/>
            <person name="Haas B.J."/>
            <person name="Haas H."/>
            <person name="Harris D.E."/>
            <person name="Horiuchi H."/>
            <person name="Huang J."/>
            <person name="Humphray S."/>
            <person name="Jimenez J."/>
            <person name="Keller N."/>
            <person name="Khouri H."/>
            <person name="Kitamoto K."/>
            <person name="Kobayashi T."/>
            <person name="Konzack S."/>
            <person name="Kulkarni R."/>
            <person name="Kumagai T."/>
            <person name="Lafton A."/>
            <person name="Latge J.-P."/>
            <person name="Li W."/>
            <person name="Lord A."/>
            <person name="Lu C."/>
            <person name="Majoros W.H."/>
            <person name="May G.S."/>
            <person name="Miller B.L."/>
            <person name="Mohamoud Y."/>
            <person name="Molina M."/>
            <person name="Monod M."/>
            <person name="Mouyna I."/>
            <person name="Mulligan S."/>
            <person name="Murphy L.D."/>
            <person name="O'Neil S."/>
            <person name="Paulsen I."/>
            <person name="Penalva M.A."/>
            <person name="Pertea M."/>
            <person name="Price C."/>
            <person name="Pritchard B.L."/>
            <person name="Quail M.A."/>
            <person name="Rabbinowitsch E."/>
            <person name="Rawlins N."/>
            <person name="Rajandream M.A."/>
            <person name="Reichard U."/>
            <person name="Renauld H."/>
            <person name="Robson G.D."/>
            <person name="Rodriguez de Cordoba S."/>
            <person name="Rodriguez-Pena J.M."/>
            <person name="Ronning C.M."/>
            <person name="Rutter S."/>
            <person name="Salzberg S.L."/>
            <person name="Sanchez M."/>
            <person name="Sanchez-Ferrero J.C."/>
            <person name="Saunders D."/>
            <person name="Seeger K."/>
            <person name="Squares R."/>
            <person name="Squares S."/>
            <person name="Takeuchi M."/>
            <person name="Tekaia F."/>
            <person name="Turner G."/>
            <person name="Vazquez de Aldana C.R."/>
            <person name="Weidman J."/>
            <person name="White O."/>
            <person name="Woodward J.R."/>
            <person name="Yu J.-H."/>
            <person name="Fraser C.M."/>
            <person name="Galagan J.E."/>
            <person name="Asai K."/>
            <person name="Machida M."/>
            <person name="Hall N."/>
            <person name="Barrell B.G."/>
            <person name="Denning D.W."/>
        </authorList>
    </citation>
    <scope>NUCLEOTIDE SEQUENCE [LARGE SCALE GENOMIC DNA]</scope>
    <source>
        <strain>ATCC MYA-4609 / CBS 101355 / FGSC A1100 / Af293</strain>
    </source>
</reference>
<evidence type="ECO:0000250" key="1"/>
<evidence type="ECO:0000256" key="2">
    <source>
        <dbReference type="SAM" id="MobiDB-lite"/>
    </source>
</evidence>
<evidence type="ECO:0000305" key="3"/>
<keyword id="KW-0378">Hydrolase</keyword>
<keyword id="KW-1185">Reference proteome</keyword>
<keyword id="KW-0719">Serine esterase</keyword>
<comment type="function">
    <text evidence="1">Demethylates proteins that have been reversibly carboxymethylated. Demethylates the phosphatase PP2A catalytic subunit (By similarity).</text>
</comment>
<comment type="catalytic activity">
    <reaction>
        <text>[phosphatase 2A protein]-C-terminal L-leucine methyl ester + H2O = [phosphatase 2A protein]-C-terminal L-leucine + methanol + H(+)</text>
        <dbReference type="Rhea" id="RHEA:48548"/>
        <dbReference type="Rhea" id="RHEA-COMP:12134"/>
        <dbReference type="Rhea" id="RHEA-COMP:12135"/>
        <dbReference type="ChEBI" id="CHEBI:15377"/>
        <dbReference type="ChEBI" id="CHEBI:15378"/>
        <dbReference type="ChEBI" id="CHEBI:17790"/>
        <dbReference type="ChEBI" id="CHEBI:90516"/>
        <dbReference type="ChEBI" id="CHEBI:90517"/>
        <dbReference type="EC" id="3.1.1.89"/>
    </reaction>
</comment>
<comment type="similarity">
    <text evidence="3">Belongs to the AB hydrolase superfamily.</text>
</comment>
<proteinExistence type="inferred from homology"/>
<accession>Q4WKB2</accession>
<protein>
    <recommendedName>
        <fullName>Protein phosphatase methylesterase 1</fullName>
        <shortName>PME-1</shortName>
        <ecNumber>3.1.1.89</ecNumber>
    </recommendedName>
</protein>
<sequence length="420" mass="45619">MSDLHKAFAKSKLAKLPPEAPLLSESSSMNHPAESSHDEDSSSVSSTGTVIPSPSRQLFARASQGSSDSSSLSWSDFFAKELFLTRETDTLRIIHHVYLTPPTDSGPLFVMHHGAGSSGLSFATCAEEIRKILPKAGILSLDARDHGRTSVQRTDGGAAELDLSLETLNQDLVYVARKTQAEMGWEELPDLVLVGHSLGGAVITDVAKKGELGNKVLAYAVLDVVEGSAMDALQSMEKYLSTRPSRFPSLTSGVEWHTRSRTIRNRASARVSVPSLLYKEETPSDPAKPWVWRTNLSATKPFWEDWFIGLSRKFLEARGGKLLLLAGTDRLDKELMIGQMQGKYQLQVLPEAGHFIQEDMPAKTAQILVDFYKRNDRSALVLPPKVADMRASAAMQKGAGAGASFSALHGGSSAGHLHKP</sequence>
<gene>
    <name type="primary">ppe1</name>
    <name type="ORF">AFUA_1G03080</name>
</gene>
<organism>
    <name type="scientific">Aspergillus fumigatus (strain ATCC MYA-4609 / CBS 101355 / FGSC A1100 / Af293)</name>
    <name type="common">Neosartorya fumigata</name>
    <dbReference type="NCBI Taxonomy" id="330879"/>
    <lineage>
        <taxon>Eukaryota</taxon>
        <taxon>Fungi</taxon>
        <taxon>Dikarya</taxon>
        <taxon>Ascomycota</taxon>
        <taxon>Pezizomycotina</taxon>
        <taxon>Eurotiomycetes</taxon>
        <taxon>Eurotiomycetidae</taxon>
        <taxon>Eurotiales</taxon>
        <taxon>Aspergillaceae</taxon>
        <taxon>Aspergillus</taxon>
        <taxon>Aspergillus subgen. Fumigati</taxon>
    </lineage>
</organism>
<name>PPME1_ASPFU</name>